<gene>
    <name type="primary">mor2</name>
    <name type="ORF">SPBP19A11.04c</name>
</gene>
<dbReference type="EMBL" id="AB093007">
    <property type="protein sequence ID" value="BAC20935.1"/>
    <property type="molecule type" value="Genomic_DNA"/>
</dbReference>
<dbReference type="EMBL" id="CU329671">
    <property type="protein sequence ID" value="CAC19754.1"/>
    <property type="molecule type" value="Genomic_DNA"/>
</dbReference>
<dbReference type="RefSeq" id="NP_596172.1">
    <property type="nucleotide sequence ID" value="NM_001022092.2"/>
</dbReference>
<dbReference type="SMR" id="Q9HDV6"/>
<dbReference type="BioGRID" id="277829">
    <property type="interactions" value="13"/>
</dbReference>
<dbReference type="FunCoup" id="Q9HDV6">
    <property type="interactions" value="259"/>
</dbReference>
<dbReference type="STRING" id="284812.Q9HDV6"/>
<dbReference type="iPTMnet" id="Q9HDV6"/>
<dbReference type="PaxDb" id="4896-SPBP19A11.04c.1"/>
<dbReference type="EnsemblFungi" id="SPBP19A11.04c.1">
    <property type="protein sequence ID" value="SPBP19A11.04c.1:pep"/>
    <property type="gene ID" value="SPBP19A11.04c"/>
</dbReference>
<dbReference type="GeneID" id="2541317"/>
<dbReference type="KEGG" id="spo:2541317"/>
<dbReference type="PomBase" id="SPBP19A11.04c">
    <property type="gene designation" value="mor2"/>
</dbReference>
<dbReference type="VEuPathDB" id="FungiDB:SPBP19A11.04c"/>
<dbReference type="eggNOG" id="KOG1825">
    <property type="taxonomic scope" value="Eukaryota"/>
</dbReference>
<dbReference type="HOGENOM" id="CLU_000325_1_0_1"/>
<dbReference type="InParanoid" id="Q9HDV6"/>
<dbReference type="OMA" id="MRADTMK"/>
<dbReference type="PhylomeDB" id="Q9HDV6"/>
<dbReference type="PRO" id="PR:Q9HDV6"/>
<dbReference type="Proteomes" id="UP000002485">
    <property type="component" value="Chromosome II"/>
</dbReference>
<dbReference type="GO" id="GO:0005938">
    <property type="term" value="C:cell cortex"/>
    <property type="evidence" value="ECO:0000318"/>
    <property type="project" value="GO_Central"/>
</dbReference>
<dbReference type="GO" id="GO:0051285">
    <property type="term" value="C:cell cortex of cell tip"/>
    <property type="evidence" value="ECO:0000314"/>
    <property type="project" value="PomBase"/>
</dbReference>
<dbReference type="GO" id="GO:1902716">
    <property type="term" value="C:cell cortex of growing cell tip"/>
    <property type="evidence" value="ECO:0000314"/>
    <property type="project" value="PomBase"/>
</dbReference>
<dbReference type="GO" id="GO:0032153">
    <property type="term" value="C:cell division site"/>
    <property type="evidence" value="ECO:0000314"/>
    <property type="project" value="PomBase"/>
</dbReference>
<dbReference type="GO" id="GO:0051286">
    <property type="term" value="C:cell tip"/>
    <property type="evidence" value="ECO:0007005"/>
    <property type="project" value="PomBase"/>
</dbReference>
<dbReference type="GO" id="GO:0005737">
    <property type="term" value="C:cytoplasm"/>
    <property type="evidence" value="ECO:0000314"/>
    <property type="project" value="PomBase"/>
</dbReference>
<dbReference type="GO" id="GO:0031097">
    <property type="term" value="C:medial cortex"/>
    <property type="evidence" value="ECO:0000314"/>
    <property type="project" value="PomBase"/>
</dbReference>
<dbReference type="GO" id="GO:0016020">
    <property type="term" value="C:membrane"/>
    <property type="evidence" value="ECO:0007669"/>
    <property type="project" value="UniProtKB-SubCell"/>
</dbReference>
<dbReference type="GO" id="GO:0030427">
    <property type="term" value="C:site of polarized growth"/>
    <property type="evidence" value="ECO:0000318"/>
    <property type="project" value="GO_Central"/>
</dbReference>
<dbReference type="GO" id="GO:0000902">
    <property type="term" value="P:cell morphogenesis"/>
    <property type="evidence" value="ECO:0000318"/>
    <property type="project" value="GO_Central"/>
</dbReference>
<dbReference type="GO" id="GO:0062200">
    <property type="term" value="P:RAM/MOR signaling"/>
    <property type="evidence" value="ECO:0000315"/>
    <property type="project" value="PomBase"/>
</dbReference>
<dbReference type="GO" id="GO:2000100">
    <property type="term" value="P:regulation of establishment or maintenance of bipolar cell polarity regulating cell shape"/>
    <property type="evidence" value="ECO:0000315"/>
    <property type="project" value="PomBase"/>
</dbReference>
<dbReference type="GO" id="GO:0070507">
    <property type="term" value="P:regulation of microtubule cytoskeleton organization"/>
    <property type="evidence" value="ECO:0000315"/>
    <property type="project" value="PomBase"/>
</dbReference>
<dbReference type="InterPro" id="IPR016024">
    <property type="entry name" value="ARM-type_fold"/>
</dbReference>
<dbReference type="InterPro" id="IPR025614">
    <property type="entry name" value="Cell_morpho_N"/>
</dbReference>
<dbReference type="InterPro" id="IPR025481">
    <property type="entry name" value="Cell_Morphogen_C"/>
</dbReference>
<dbReference type="InterPro" id="IPR039867">
    <property type="entry name" value="Furry/Tao3/Mor2"/>
</dbReference>
<dbReference type="InterPro" id="IPR029473">
    <property type="entry name" value="MOR2-PAG1_mid"/>
</dbReference>
<dbReference type="PANTHER" id="PTHR12295">
    <property type="entry name" value="FURRY-RELATED"/>
    <property type="match status" value="1"/>
</dbReference>
<dbReference type="PANTHER" id="PTHR12295:SF30">
    <property type="entry name" value="PROTEIN FURRY"/>
    <property type="match status" value="1"/>
</dbReference>
<dbReference type="Pfam" id="PF14225">
    <property type="entry name" value="MOR2-PAG1_C"/>
    <property type="match status" value="1"/>
</dbReference>
<dbReference type="Pfam" id="PF14228">
    <property type="entry name" value="MOR2-PAG1_mid"/>
    <property type="match status" value="3"/>
</dbReference>
<dbReference type="Pfam" id="PF14222">
    <property type="entry name" value="MOR2-PAG1_N"/>
    <property type="match status" value="1"/>
</dbReference>
<dbReference type="SUPFAM" id="SSF48371">
    <property type="entry name" value="ARM repeat"/>
    <property type="match status" value="1"/>
</dbReference>
<protein>
    <recommendedName>
        <fullName>Cell polarity protein mor2</fullName>
    </recommendedName>
    <alternativeName>
        <fullName>Morphological round protein 2</fullName>
    </alternativeName>
</protein>
<organism>
    <name type="scientific">Schizosaccharomyces pombe (strain 972 / ATCC 24843)</name>
    <name type="common">Fission yeast</name>
    <dbReference type="NCBI Taxonomy" id="284812"/>
    <lineage>
        <taxon>Eukaryota</taxon>
        <taxon>Fungi</taxon>
        <taxon>Dikarya</taxon>
        <taxon>Ascomycota</taxon>
        <taxon>Taphrinomycotina</taxon>
        <taxon>Schizosaccharomycetes</taxon>
        <taxon>Schizosaccharomycetales</taxon>
        <taxon>Schizosaccharomycetaceae</taxon>
        <taxon>Schizosaccharomyces</taxon>
    </lineage>
</organism>
<reference key="1">
    <citation type="journal article" date="2002" name="EMBO J.">
        <title>Fission yeast Mor2/Cps12, a protein similar to Drosophila Furry, is essential for cell morphogenesis and its mutation induces Wee1-dependent G2 delay.</title>
        <authorList>
            <person name="Hirata D."/>
            <person name="Kishimoto N."/>
            <person name="Suda M."/>
            <person name="Sogabe Y."/>
            <person name="Nakagawa S."/>
            <person name="Yoshida Y."/>
            <person name="Sakai K."/>
            <person name="Mizunuma M."/>
            <person name="Miyakawa T."/>
            <person name="Ishiguro J."/>
            <person name="Toda T."/>
        </authorList>
    </citation>
    <scope>NUCLEOTIDE SEQUENCE [GENOMIC DNA]</scope>
    <scope>FUNCTION</scope>
    <scope>SUBCELLULAR LOCATION</scope>
    <source>
        <strain>972 / ATCC 24843</strain>
    </source>
</reference>
<reference key="2">
    <citation type="journal article" date="2002" name="Nature">
        <title>The genome sequence of Schizosaccharomyces pombe.</title>
        <authorList>
            <person name="Wood V."/>
            <person name="Gwilliam R."/>
            <person name="Rajandream M.A."/>
            <person name="Lyne M.H."/>
            <person name="Lyne R."/>
            <person name="Stewart A."/>
            <person name="Sgouros J.G."/>
            <person name="Peat N."/>
            <person name="Hayles J."/>
            <person name="Baker S.G."/>
            <person name="Basham D."/>
            <person name="Bowman S."/>
            <person name="Brooks K."/>
            <person name="Brown D."/>
            <person name="Brown S."/>
            <person name="Chillingworth T."/>
            <person name="Churcher C.M."/>
            <person name="Collins M."/>
            <person name="Connor R."/>
            <person name="Cronin A."/>
            <person name="Davis P."/>
            <person name="Feltwell T."/>
            <person name="Fraser A."/>
            <person name="Gentles S."/>
            <person name="Goble A."/>
            <person name="Hamlin N."/>
            <person name="Harris D.E."/>
            <person name="Hidalgo J."/>
            <person name="Hodgson G."/>
            <person name="Holroyd S."/>
            <person name="Hornsby T."/>
            <person name="Howarth S."/>
            <person name="Huckle E.J."/>
            <person name="Hunt S."/>
            <person name="Jagels K."/>
            <person name="James K.D."/>
            <person name="Jones L."/>
            <person name="Jones M."/>
            <person name="Leather S."/>
            <person name="McDonald S."/>
            <person name="McLean J."/>
            <person name="Mooney P."/>
            <person name="Moule S."/>
            <person name="Mungall K.L."/>
            <person name="Murphy L.D."/>
            <person name="Niblett D."/>
            <person name="Odell C."/>
            <person name="Oliver K."/>
            <person name="O'Neil S."/>
            <person name="Pearson D."/>
            <person name="Quail M.A."/>
            <person name="Rabbinowitsch E."/>
            <person name="Rutherford K.M."/>
            <person name="Rutter S."/>
            <person name="Saunders D."/>
            <person name="Seeger K."/>
            <person name="Sharp S."/>
            <person name="Skelton J."/>
            <person name="Simmonds M.N."/>
            <person name="Squares R."/>
            <person name="Squares S."/>
            <person name="Stevens K."/>
            <person name="Taylor K."/>
            <person name="Taylor R.G."/>
            <person name="Tivey A."/>
            <person name="Walsh S.V."/>
            <person name="Warren T."/>
            <person name="Whitehead S."/>
            <person name="Woodward J.R."/>
            <person name="Volckaert G."/>
            <person name="Aert R."/>
            <person name="Robben J."/>
            <person name="Grymonprez B."/>
            <person name="Weltjens I."/>
            <person name="Vanstreels E."/>
            <person name="Rieger M."/>
            <person name="Schaefer M."/>
            <person name="Mueller-Auer S."/>
            <person name="Gabel C."/>
            <person name="Fuchs M."/>
            <person name="Duesterhoeft A."/>
            <person name="Fritzc C."/>
            <person name="Holzer E."/>
            <person name="Moestl D."/>
            <person name="Hilbert H."/>
            <person name="Borzym K."/>
            <person name="Langer I."/>
            <person name="Beck A."/>
            <person name="Lehrach H."/>
            <person name="Reinhardt R."/>
            <person name="Pohl T.M."/>
            <person name="Eger P."/>
            <person name="Zimmermann W."/>
            <person name="Wedler H."/>
            <person name="Wambutt R."/>
            <person name="Purnelle B."/>
            <person name="Goffeau A."/>
            <person name="Cadieu E."/>
            <person name="Dreano S."/>
            <person name="Gloux S."/>
            <person name="Lelaure V."/>
            <person name="Mottier S."/>
            <person name="Galibert F."/>
            <person name="Aves S.J."/>
            <person name="Xiang Z."/>
            <person name="Hunt C."/>
            <person name="Moore K."/>
            <person name="Hurst S.M."/>
            <person name="Lucas M."/>
            <person name="Rochet M."/>
            <person name="Gaillardin C."/>
            <person name="Tallada V.A."/>
            <person name="Garzon A."/>
            <person name="Thode G."/>
            <person name="Daga R.R."/>
            <person name="Cruzado L."/>
            <person name="Jimenez J."/>
            <person name="Sanchez M."/>
            <person name="del Rey F."/>
            <person name="Benito J."/>
            <person name="Dominguez A."/>
            <person name="Revuelta J.L."/>
            <person name="Moreno S."/>
            <person name="Armstrong J."/>
            <person name="Forsburg S.L."/>
            <person name="Cerutti L."/>
            <person name="Lowe T."/>
            <person name="McCombie W.R."/>
            <person name="Paulsen I."/>
            <person name="Potashkin J."/>
            <person name="Shpakovski G.V."/>
            <person name="Ussery D."/>
            <person name="Barrell B.G."/>
            <person name="Nurse P."/>
        </authorList>
    </citation>
    <scope>NUCLEOTIDE SEQUENCE [LARGE SCALE GENOMIC DNA]</scope>
    <source>
        <strain>972 / ATCC 24843</strain>
    </source>
</reference>
<name>MOR2_SCHPO</name>
<sequence>MSLNEIAHDQPVENGPLYSEKQDHTAVDYALHILFTQFVRLSEQKISFLSRYHANEGKNAEPVRFNVGEQEAILLLKKGEDNEFDRCIQALVALASSKPVAVIESLLCWRKVRVDITSSSGTPRVVNERRSSISIYILCRVLTEIAETIPSNALEESTVSCLLECVFHQLLSAKNLPVSSSYFSLANWESFAFLVGSMSRFNFVMVSDRFIEEIEHLEKSGCDSRQKETVLVHLLRAMRYLRLQLYPTTLLEESIAFLQSLTSFFMKANTALKIEYAYLMEQLLRPLISRATFEVNIPAWSRTIETIYPVVLKMCTKTKYWNVFFPFCCTLLCLSPKQFFLKHWISSLDAAFFRVKDRRLRNTGLPHLSRVVWTYSNQYKEEPSIMNSNISNILKSGFSIGKKFSVVPFATLEELDGYAQIVRVVGAHFPELVIKEILTPLSTDAFTENIGPEKLMIVVRSVYYILHDMKYKKSDSTIFEYIEFEFVDLHEVAVGTPLQQFVHNLSQKLLFLVFQLSTNTNCYLDSKNATSLLALYINALKVFPCLMGKLEQRVIDAYVKCLNCSNKIIHTVCHNSLIYFSSGLKMSKSVISCLSRKLVKGSEYLLRTYHEVIRIWISQQEAVIEKRNSVLSNKSCASSESNTPASVKQDYDDIQSWTIIEEIQSLGVLHLSSPSVGIRKFAVALLNDVKQLNTEYLMLSSDKVEVGDIYSEPTIVDVLKDCDSSILSVESHLPTAAERSRLRKFINDGTKDMLLKLATSNSGVDISIWYNVFPRFIKVCFERFPTTMALLRNTVCEKLPSITMQLLSRIESSELNFNLKSAVKNDNFPEFLLVQWKLYLIVACCTITYTSNVDYSHTDLRRTLTAVQSGNHLRGLQETIKITSAESLFSMVLPLIFTEFSPIREAVVFAIGCINVNAFPQLVRSLKPYISVLKQDHQEFIFAGLNFPSVKRRNKPDLLLRSEIAHIFAMTSHLLLHELLNEDREALSVISEFLKDLKGFLSTPNVQADEKYLKLRCYFSQLLEKVLLVQNLHPSSEVLPFSGRASCWKLLDEWTGFGPARAITKNREELMRAHIRGNNKDIRERDKLLASFEAGKQNLEYLAIKAMIALCTAKLQQELTEGVFLFDIEILLNWFTAVFGSPSKAIVGLARKGLTALLLENSSNEVLLQKVINRCFSKEISQTISNYYFLSLSEMLIQINPNNLSKPKLLPLCLVNLSTNNLSVRLKAFELLGNFHLNNFTMTALMEFKTFLESSNPALYLKPQYLFSVQLASDFTEDSFTLTSECLRYFNYGHQHRRGLVTVLLPWLQNLELKMDVENKTFDSFTAVILIDLIEVTAKFTNDLPNEIEALWTSLALSRHKSNWTVILFFLMQQCYQRKTFSFVDCTRQITIYLAKTELLSDLYSTLLSFVCPANVSNENQEVYKFSLEDLSSTYVANLEDLFPSEKNHISYSPCQLSLLLLMDILPNPSIITVTDDVATILHAAFIQFDHYSRIVQEQCQQIFQYVVRKVLAMEGRLDYDDAYFDFNVESSLITGLRGKTKKEDDLVKYHNMILKTIELLSSSYPELKQIWGEVALSWATTCPSRRLACNSFQLFRSLLPDFDARMLLEIISRLVGTISDETSYLRDYSVEILRTFNSYVLVMNSDDLLSYSQILWTAIACLTTIHEDEFIESVKIAYAYFLRVEETDSATQQIMETFPQNWVGDYQGLQILILKGFRSTNSFEITMNFFLLLMDFKDNDLVGVGYLRILSCLLVSLPAMVYTYEHSDPITFDLSVFCHKLATLASQFNDDALIELLDTYLKRKFRSIKDFLKHTVSYLYSYYFEDYELEIVSTLTMFLSNNLTWFRKSTLDVLKELFPLIDFQKPIYSEHGLGIVSPLLRLLPTGYAMEALSLLTDSVLHVSAPTDMQTLKLLMVDPKLKNSDDRLAGFFEIPDEDGWYEPNSEYAAAITKSNVHAVFYSCSTTEASVSTPEVRFHADEVSNYPRHVPTDSHGSLDENSLGELVTTLHSLDVFFAEDRDEELIQPDVAVDPKLDITSEDYDDRIATILSGSLRRQKQGLMAYETESFRDYSPNEEIDASAKLPMDMPPVRVRKSSFISKLKPHYFMDAESYYPSLKALGNSAEHRLSLDEIRGAAELKQNKNWNSMLDQSVSMINEDSVEDHETHENYYHLRTMFQGSESNESFTDTTRSRGWH</sequence>
<feature type="chain" id="PRO_0000096536" description="Cell polarity protein mor2">
    <location>
        <begin position="1"/>
        <end position="2196"/>
    </location>
</feature>
<evidence type="ECO:0000269" key="1">
    <source>
    </source>
</evidence>
<evidence type="ECO:0000305" key="2"/>
<keyword id="KW-0963">Cytoplasm</keyword>
<keyword id="KW-0472">Membrane</keyword>
<keyword id="KW-1185">Reference proteome</keyword>
<comment type="function">
    <text evidence="1">Required for the maintenance of cell polarity. Has a role in localizing F-actin at the cell tips.</text>
</comment>
<comment type="subcellular location">
    <subcellularLocation>
        <location evidence="1">Cytoplasm</location>
    </subcellularLocation>
    <subcellularLocation>
        <location evidence="1">Membrane</location>
        <topology evidence="1">Peripheral membrane protein</topology>
    </subcellularLocation>
    <text>Found at the cell tips and at the site of septum formation.</text>
</comment>
<comment type="similarity">
    <text evidence="2">To yeast TAO3/PAG1.</text>
</comment>
<proteinExistence type="predicted"/>
<accession>Q9HDV6</accession>